<keyword id="KW-0067">ATP-binding</keyword>
<keyword id="KW-0418">Kinase</keyword>
<keyword id="KW-0547">Nucleotide-binding</keyword>
<keyword id="KW-0597">Phosphoprotein</keyword>
<keyword id="KW-1185">Reference proteome</keyword>
<keyword id="KW-0723">Serine/threonine-protein kinase</keyword>
<keyword id="KW-0808">Transferase</keyword>
<name>SLT2_YEAST</name>
<accession>Q00772</accession>
<accession>D3DKX7</accession>
<sequence>MADKIERHTFKVFNQDFSVDKRFQLIKEIGHGAYGIVCSARFAEAAEDTTVAIKKVTNVFSKTLLCKRSLRELKLLRHFRGHKNITCLYDMDIVFYPDGSINGLYLYEELMECDMHQIIKSGQPLTDAHYQSFTYQILCGLKYIHSADVLHRDLKPGNLLVNADCQLKICDFGLARGYSENPVENSQFLTEYVATRWYRAPEIMLSYQGYTKAIDVWSAGCILAEFLGGKPIFKGKDYVNQLNQILQVLGTPPDETLRRIGSKNVQDYIHQLGFIPKVPFVNLYPNANSQALDLLEQMLAFDPQKRITVDEALEHPYLSIWHDPADEPVCSEKFEFSFESVNDMEDLKQMVIQEVQDFRLFVRQPLLEEQRQLQLQQQQQQQQQQQQQQQQPSDVDNGNAAASEENYPKQMATSNSVAPQQESFGIHSQNLPRHDADFPPRPQESMMEMRPATGNTADIPPQNDNGTLLDLEKELEFGLDRKYF</sequence>
<feature type="chain" id="PRO_0000186338" description="Mitogen-activated protein kinase SLT2/MPK1">
    <location>
        <begin position="1"/>
        <end position="484"/>
    </location>
</feature>
<feature type="domain" description="Protein kinase" evidence="2">
    <location>
        <begin position="23"/>
        <end position="318"/>
    </location>
</feature>
<feature type="region of interest" description="Disordered" evidence="4">
    <location>
        <begin position="383"/>
        <end position="403"/>
    </location>
</feature>
<feature type="region of interest" description="Disordered" evidence="4">
    <location>
        <begin position="426"/>
        <end position="464"/>
    </location>
</feature>
<feature type="short sequence motif" description="TXY">
    <location>
        <begin position="190"/>
        <end position="192"/>
    </location>
</feature>
<feature type="compositionally biased region" description="Low complexity" evidence="4">
    <location>
        <begin position="383"/>
        <end position="392"/>
    </location>
</feature>
<feature type="active site" description="Proton acceptor" evidence="2 3">
    <location>
        <position position="153"/>
    </location>
</feature>
<feature type="binding site" evidence="2">
    <location>
        <begin position="29"/>
        <end position="37"/>
    </location>
    <ligand>
        <name>ATP</name>
        <dbReference type="ChEBI" id="CHEBI:30616"/>
    </ligand>
</feature>
<feature type="binding site" evidence="2">
    <location>
        <position position="54"/>
    </location>
    <ligand>
        <name>ATP</name>
        <dbReference type="ChEBI" id="CHEBI:30616"/>
    </ligand>
</feature>
<feature type="modified residue" description="Phosphothreonine" evidence="10">
    <location>
        <position position="190"/>
    </location>
</feature>
<feature type="modified residue" description="Phosphotyrosine" evidence="9">
    <location>
        <position position="192"/>
    </location>
</feature>
<feature type="sequence conflict" description="In Ref. 1; CAA41954." evidence="8" ref="1">
    <original>V</original>
    <variation>L</variation>
    <location>
        <position position="56"/>
    </location>
</feature>
<feature type="sequence conflict" description="In Ref. 1; CAA41954." evidence="8" ref="1">
    <original>T</original>
    <variation>S</variation>
    <location>
        <position position="467"/>
    </location>
</feature>
<gene>
    <name type="primary">SLT2</name>
    <name type="synonym">MPK1</name>
    <name type="ordered locus">YHR030C</name>
</gene>
<dbReference type="EC" id="2.7.11.24"/>
<dbReference type="EMBL" id="X59262">
    <property type="protein sequence ID" value="CAA41954.1"/>
    <property type="molecule type" value="Genomic_DNA"/>
</dbReference>
<dbReference type="EMBL" id="U00062">
    <property type="protein sequence ID" value="AAB68912.1"/>
    <property type="molecule type" value="Genomic_DNA"/>
</dbReference>
<dbReference type="EMBL" id="BK006934">
    <property type="protein sequence ID" value="DAA06721.1"/>
    <property type="molecule type" value="Genomic_DNA"/>
</dbReference>
<dbReference type="PIR" id="S43737">
    <property type="entry name" value="S43737"/>
</dbReference>
<dbReference type="RefSeq" id="NP_011895.1">
    <property type="nucleotide sequence ID" value="NM_001179160.1"/>
</dbReference>
<dbReference type="SMR" id="Q00772"/>
<dbReference type="BioGRID" id="36461">
    <property type="interactions" value="1050"/>
</dbReference>
<dbReference type="DIP" id="DIP-1448N"/>
<dbReference type="ELM" id="Q00772"/>
<dbReference type="FunCoup" id="Q00772">
    <property type="interactions" value="610"/>
</dbReference>
<dbReference type="IntAct" id="Q00772">
    <property type="interactions" value="100"/>
</dbReference>
<dbReference type="MINT" id="Q00772"/>
<dbReference type="STRING" id="4932.YHR030C"/>
<dbReference type="iPTMnet" id="Q00772"/>
<dbReference type="PaxDb" id="4932-YHR030C"/>
<dbReference type="PeptideAtlas" id="Q00772"/>
<dbReference type="EnsemblFungi" id="YHR030C_mRNA">
    <property type="protein sequence ID" value="YHR030C"/>
    <property type="gene ID" value="YHR030C"/>
</dbReference>
<dbReference type="GeneID" id="856425"/>
<dbReference type="KEGG" id="sce:YHR030C"/>
<dbReference type="AGR" id="SGD:S000001072"/>
<dbReference type="SGD" id="S000001072">
    <property type="gene designation" value="SLT2"/>
</dbReference>
<dbReference type="VEuPathDB" id="FungiDB:YHR030C"/>
<dbReference type="eggNOG" id="KOG0660">
    <property type="taxonomic scope" value="Eukaryota"/>
</dbReference>
<dbReference type="GeneTree" id="ENSGT00940000176702"/>
<dbReference type="HOGENOM" id="CLU_000288_181_1_1"/>
<dbReference type="InParanoid" id="Q00772"/>
<dbReference type="OMA" id="MDIPRPE"/>
<dbReference type="OrthoDB" id="192887at2759"/>
<dbReference type="BioCyc" id="YEAST:G3O-31090-MONOMER"/>
<dbReference type="BRENDA" id="2.7.11.24">
    <property type="organism ID" value="984"/>
</dbReference>
<dbReference type="Reactome" id="R-SCE-110056">
    <property type="pathway name" value="MAPK3 (ERK1) activation"/>
</dbReference>
<dbReference type="Reactome" id="R-SCE-111995">
    <property type="pathway name" value="phospho-PLA2 pathway"/>
</dbReference>
<dbReference type="Reactome" id="R-SCE-112409">
    <property type="pathway name" value="RAF-independent MAPK1/3 activation"/>
</dbReference>
<dbReference type="Reactome" id="R-SCE-112411">
    <property type="pathway name" value="MAPK1 (ERK2) activation"/>
</dbReference>
<dbReference type="Reactome" id="R-SCE-170968">
    <property type="pathway name" value="Frs2-mediated activation"/>
</dbReference>
<dbReference type="Reactome" id="R-SCE-198753">
    <property type="pathway name" value="ERK/MAPK targets"/>
</dbReference>
<dbReference type="Reactome" id="R-SCE-202670">
    <property type="pathway name" value="ERKs are inactivated"/>
</dbReference>
<dbReference type="Reactome" id="R-SCE-2559582">
    <property type="pathway name" value="Senescence-Associated Secretory Phenotype (SASP)"/>
</dbReference>
<dbReference type="Reactome" id="R-SCE-3371453">
    <property type="pathway name" value="Regulation of HSF1-mediated heat shock response"/>
</dbReference>
<dbReference type="Reactome" id="R-SCE-375165">
    <property type="pathway name" value="NCAM signaling for neurite out-growth"/>
</dbReference>
<dbReference type="Reactome" id="R-SCE-4086398">
    <property type="pathway name" value="Ca2+ pathway"/>
</dbReference>
<dbReference type="Reactome" id="R-SCE-437239">
    <property type="pathway name" value="Recycling pathway of L1"/>
</dbReference>
<dbReference type="Reactome" id="R-SCE-445144">
    <property type="pathway name" value="Signal transduction by L1"/>
</dbReference>
<dbReference type="Reactome" id="R-SCE-450341">
    <property type="pathway name" value="Activation of the AP-1 family of transcription factors"/>
</dbReference>
<dbReference type="Reactome" id="R-SCE-5673001">
    <property type="pathway name" value="RAF/MAP kinase cascade"/>
</dbReference>
<dbReference type="Reactome" id="R-SCE-5674135">
    <property type="pathway name" value="MAP2K and MAPK activation"/>
</dbReference>
<dbReference type="Reactome" id="R-SCE-5674499">
    <property type="pathway name" value="Negative feedback regulation of MAPK pathway"/>
</dbReference>
<dbReference type="Reactome" id="R-SCE-5675221">
    <property type="pathway name" value="Negative regulation of MAPK pathway"/>
</dbReference>
<dbReference type="Reactome" id="R-SCE-5687128">
    <property type="pathway name" value="MAPK6/MAPK4 signaling"/>
</dbReference>
<dbReference type="Reactome" id="R-SCE-6798695">
    <property type="pathway name" value="Neutrophil degranulation"/>
</dbReference>
<dbReference type="Reactome" id="R-SCE-881907">
    <property type="pathway name" value="Gastrin-CREB signalling pathway via PKC and MAPK"/>
</dbReference>
<dbReference type="Reactome" id="R-SCE-9634635">
    <property type="pathway name" value="Estrogen-stimulated signaling through PRKCZ"/>
</dbReference>
<dbReference type="Reactome" id="R-SCE-9856649">
    <property type="pathway name" value="Transcriptional and post-translational regulation of MITF-M expression and activity"/>
</dbReference>
<dbReference type="BioGRID-ORCS" id="856425">
    <property type="hits" value="5 hits in 13 CRISPR screens"/>
</dbReference>
<dbReference type="CD-CODE" id="876000F7">
    <property type="entry name" value="Centrosome"/>
</dbReference>
<dbReference type="PRO" id="PR:Q00772"/>
<dbReference type="Proteomes" id="UP000002311">
    <property type="component" value="Chromosome VIII"/>
</dbReference>
<dbReference type="RNAct" id="Q00772">
    <property type="molecule type" value="protein"/>
</dbReference>
<dbReference type="GO" id="GO:0005935">
    <property type="term" value="C:cellular bud neck"/>
    <property type="evidence" value="ECO:0000314"/>
    <property type="project" value="SGD"/>
</dbReference>
<dbReference type="GO" id="GO:0005934">
    <property type="term" value="C:cellular bud tip"/>
    <property type="evidence" value="ECO:0000314"/>
    <property type="project" value="SGD"/>
</dbReference>
<dbReference type="GO" id="GO:0005737">
    <property type="term" value="C:cytoplasm"/>
    <property type="evidence" value="ECO:0007005"/>
    <property type="project" value="SGD"/>
</dbReference>
<dbReference type="GO" id="GO:0005829">
    <property type="term" value="C:cytosol"/>
    <property type="evidence" value="ECO:0007005"/>
    <property type="project" value="SGD"/>
</dbReference>
<dbReference type="GO" id="GO:0043332">
    <property type="term" value="C:mating projection tip"/>
    <property type="evidence" value="ECO:0000314"/>
    <property type="project" value="SGD"/>
</dbReference>
<dbReference type="GO" id="GO:0005739">
    <property type="term" value="C:mitochondrion"/>
    <property type="evidence" value="ECO:0000314"/>
    <property type="project" value="SGD"/>
</dbReference>
<dbReference type="GO" id="GO:0005634">
    <property type="term" value="C:nucleus"/>
    <property type="evidence" value="ECO:0000314"/>
    <property type="project" value="SGD"/>
</dbReference>
<dbReference type="GO" id="GO:0005524">
    <property type="term" value="F:ATP binding"/>
    <property type="evidence" value="ECO:0007669"/>
    <property type="project" value="UniProtKB-KW"/>
</dbReference>
<dbReference type="GO" id="GO:0004707">
    <property type="term" value="F:MAP kinase activity"/>
    <property type="evidence" value="ECO:0000318"/>
    <property type="project" value="GO_Central"/>
</dbReference>
<dbReference type="GO" id="GO:0004672">
    <property type="term" value="F:protein kinase activity"/>
    <property type="evidence" value="ECO:0007005"/>
    <property type="project" value="SGD"/>
</dbReference>
<dbReference type="GO" id="GO:0106310">
    <property type="term" value="F:protein serine kinase activity"/>
    <property type="evidence" value="ECO:0007669"/>
    <property type="project" value="RHEA"/>
</dbReference>
<dbReference type="GO" id="GO:0004674">
    <property type="term" value="F:protein serine/threonine kinase activity"/>
    <property type="evidence" value="ECO:0000314"/>
    <property type="project" value="SGD"/>
</dbReference>
<dbReference type="GO" id="GO:0000196">
    <property type="term" value="P:cell integrity MAPK cascade"/>
    <property type="evidence" value="ECO:0000316"/>
    <property type="project" value="SGD"/>
</dbReference>
<dbReference type="GO" id="GO:0030968">
    <property type="term" value="P:endoplasmic reticulum unfolded protein response"/>
    <property type="evidence" value="ECO:0000314"/>
    <property type="project" value="SGD"/>
</dbReference>
<dbReference type="GO" id="GO:0009272">
    <property type="term" value="P:fungal-type cell wall biogenesis"/>
    <property type="evidence" value="ECO:0000316"/>
    <property type="project" value="SGD"/>
</dbReference>
<dbReference type="GO" id="GO:0035556">
    <property type="term" value="P:intracellular signal transduction"/>
    <property type="evidence" value="ECO:0000318"/>
    <property type="project" value="GO_Central"/>
</dbReference>
<dbReference type="GO" id="GO:0036498">
    <property type="term" value="P:IRE1-mediated unfolded protein response"/>
    <property type="evidence" value="ECO:0000315"/>
    <property type="project" value="SGD"/>
</dbReference>
<dbReference type="GO" id="GO:0000425">
    <property type="term" value="P:pexophagy"/>
    <property type="evidence" value="ECO:0000315"/>
    <property type="project" value="SGD"/>
</dbReference>
<dbReference type="GO" id="GO:0010973">
    <property type="term" value="P:positive regulation of division septum assembly"/>
    <property type="evidence" value="ECO:0000316"/>
    <property type="project" value="SGD"/>
</dbReference>
<dbReference type="GO" id="GO:0008361">
    <property type="term" value="P:regulation of cell size"/>
    <property type="evidence" value="ECO:0000315"/>
    <property type="project" value="SGD"/>
</dbReference>
<dbReference type="GO" id="GO:0060256">
    <property type="term" value="P:regulation of flocculation"/>
    <property type="evidence" value="ECO:0000315"/>
    <property type="project" value="SGD"/>
</dbReference>
<dbReference type="GO" id="GO:0060237">
    <property type="term" value="P:regulation of fungal-type cell wall organization"/>
    <property type="evidence" value="ECO:0000315"/>
    <property type="project" value="SGD"/>
</dbReference>
<dbReference type="GO" id="GO:0090364">
    <property type="term" value="P:regulation of proteasome assembly"/>
    <property type="evidence" value="ECO:0000315"/>
    <property type="project" value="SGD"/>
</dbReference>
<dbReference type="GO" id="GO:0042306">
    <property type="term" value="P:regulation of protein import into nucleus"/>
    <property type="evidence" value="ECO:0000315"/>
    <property type="project" value="SGD"/>
</dbReference>
<dbReference type="GO" id="GO:0010447">
    <property type="term" value="P:response to acidic pH"/>
    <property type="evidence" value="ECO:0000315"/>
    <property type="project" value="SGD"/>
</dbReference>
<dbReference type="GO" id="GO:0034976">
    <property type="term" value="P:response to endoplasmic reticulum stress"/>
    <property type="evidence" value="ECO:0000315"/>
    <property type="project" value="SGD"/>
</dbReference>
<dbReference type="GO" id="GO:0007165">
    <property type="term" value="P:signal transduction"/>
    <property type="evidence" value="ECO:0000315"/>
    <property type="project" value="SGD"/>
</dbReference>
<dbReference type="CDD" id="cd07857">
    <property type="entry name" value="STKc_MPK1"/>
    <property type="match status" value="1"/>
</dbReference>
<dbReference type="FunFam" id="1.10.510.10:FF:000013">
    <property type="entry name" value="Mitogen-activated protein kinase"/>
    <property type="match status" value="1"/>
</dbReference>
<dbReference type="FunFam" id="3.30.200.20:FF:000647">
    <property type="entry name" value="Mitogen-activated protein kinase"/>
    <property type="match status" value="1"/>
</dbReference>
<dbReference type="Gene3D" id="3.30.200.20">
    <property type="entry name" value="Phosphorylase Kinase, domain 1"/>
    <property type="match status" value="1"/>
</dbReference>
<dbReference type="Gene3D" id="1.10.510.10">
    <property type="entry name" value="Transferase(Phosphotransferase) domain 1"/>
    <property type="match status" value="1"/>
</dbReference>
<dbReference type="InterPro" id="IPR011009">
    <property type="entry name" value="Kinase-like_dom_sf"/>
</dbReference>
<dbReference type="InterPro" id="IPR050117">
    <property type="entry name" value="MAP_kinase"/>
</dbReference>
<dbReference type="InterPro" id="IPR003527">
    <property type="entry name" value="MAP_kinase_CS"/>
</dbReference>
<dbReference type="InterPro" id="IPR000719">
    <property type="entry name" value="Prot_kinase_dom"/>
</dbReference>
<dbReference type="InterPro" id="IPR017441">
    <property type="entry name" value="Protein_kinase_ATP_BS"/>
</dbReference>
<dbReference type="InterPro" id="IPR008271">
    <property type="entry name" value="Ser/Thr_kinase_AS"/>
</dbReference>
<dbReference type="PANTHER" id="PTHR24055">
    <property type="entry name" value="MITOGEN-ACTIVATED PROTEIN KINASE"/>
    <property type="match status" value="1"/>
</dbReference>
<dbReference type="Pfam" id="PF00069">
    <property type="entry name" value="Pkinase"/>
    <property type="match status" value="1"/>
</dbReference>
<dbReference type="SMART" id="SM00220">
    <property type="entry name" value="S_TKc"/>
    <property type="match status" value="1"/>
</dbReference>
<dbReference type="SUPFAM" id="SSF56112">
    <property type="entry name" value="Protein kinase-like (PK-like)"/>
    <property type="match status" value="1"/>
</dbReference>
<dbReference type="PROSITE" id="PS01351">
    <property type="entry name" value="MAPK"/>
    <property type="match status" value="1"/>
</dbReference>
<dbReference type="PROSITE" id="PS00107">
    <property type="entry name" value="PROTEIN_KINASE_ATP"/>
    <property type="match status" value="1"/>
</dbReference>
<dbReference type="PROSITE" id="PS50011">
    <property type="entry name" value="PROTEIN_KINASE_DOM"/>
    <property type="match status" value="1"/>
</dbReference>
<dbReference type="PROSITE" id="PS00108">
    <property type="entry name" value="PROTEIN_KINASE_ST"/>
    <property type="match status" value="1"/>
</dbReference>
<proteinExistence type="evidence at protein level"/>
<protein>
    <recommendedName>
        <fullName>Mitogen-activated protein kinase SLT2/MPK1</fullName>
        <shortName>MAP kinase MPK1</shortName>
        <ecNumber>2.7.11.24</ecNumber>
    </recommendedName>
</protein>
<comment type="function">
    <text evidence="6 7">Serine/threonine protein kinase involved in a signal transduction pathway that plays a role in yeast cell morphogenesis and cell growth. This pathway seems to start by SMP3; then involve the kinase PKC1 that may act the BCK1 kinase that then phosphorylates MKK1 and MKK2 which themselves phosphorylate the SLT2/MPK1 kinase which itself then phosphorylates and activates the transcription factor RLM1. Directly phosphorylates BCY1 upon TOR complex 1 (TORC1) inhibition.</text>
</comment>
<comment type="catalytic activity">
    <reaction>
        <text>L-seryl-[protein] + ATP = O-phospho-L-seryl-[protein] + ADP + H(+)</text>
        <dbReference type="Rhea" id="RHEA:17989"/>
        <dbReference type="Rhea" id="RHEA-COMP:9863"/>
        <dbReference type="Rhea" id="RHEA-COMP:11604"/>
        <dbReference type="ChEBI" id="CHEBI:15378"/>
        <dbReference type="ChEBI" id="CHEBI:29999"/>
        <dbReference type="ChEBI" id="CHEBI:30616"/>
        <dbReference type="ChEBI" id="CHEBI:83421"/>
        <dbReference type="ChEBI" id="CHEBI:456216"/>
        <dbReference type="EC" id="2.7.11.24"/>
    </reaction>
</comment>
<comment type="catalytic activity">
    <reaction>
        <text>L-threonyl-[protein] + ATP = O-phospho-L-threonyl-[protein] + ADP + H(+)</text>
        <dbReference type="Rhea" id="RHEA:46608"/>
        <dbReference type="Rhea" id="RHEA-COMP:11060"/>
        <dbReference type="Rhea" id="RHEA-COMP:11605"/>
        <dbReference type="ChEBI" id="CHEBI:15378"/>
        <dbReference type="ChEBI" id="CHEBI:30013"/>
        <dbReference type="ChEBI" id="CHEBI:30616"/>
        <dbReference type="ChEBI" id="CHEBI:61977"/>
        <dbReference type="ChEBI" id="CHEBI:456216"/>
        <dbReference type="EC" id="2.7.11.24"/>
    </reaction>
</comment>
<comment type="cofactor">
    <cofactor evidence="1">
        <name>Mg(2+)</name>
        <dbReference type="ChEBI" id="CHEBI:18420"/>
    </cofactor>
</comment>
<comment type="activity regulation">
    <text evidence="8">Activated by tyrosine and threonine phosphorylation by MKK1 and MKK2.</text>
</comment>
<comment type="subunit">
    <text evidence="7">Interacts with RLM1.</text>
</comment>
<comment type="interaction">
    <interactant intactId="EBI-17372">
        <id>Q00772</id>
    </interactant>
    <interactant intactId="EBI-2186">
        <id>Q02336</id>
        <label>ADA2</label>
    </interactant>
    <organismsDiffer>false</organismsDiffer>
    <experiments>2</experiments>
</comment>
<comment type="interaction">
    <interactant intactId="EBI-17372">
        <id>Q00772</id>
    </interactant>
    <interactant intactId="EBI-29913">
        <id>Q06697</id>
        <label>CDC73</label>
    </interactant>
    <organismsDiffer>false</organismsDiffer>
    <experiments>2</experiments>
</comment>
<comment type="interaction">
    <interactant intactId="EBI-17372">
        <id>Q00772</id>
    </interactant>
    <interactant intactId="EBI-5283">
        <id>P89105</id>
        <label>CTR9</label>
    </interactant>
    <organismsDiffer>false</organismsDiffer>
    <experiments>2</experiments>
</comment>
<comment type="interaction">
    <interactant intactId="EBI-17372">
        <id>Q00772</id>
    </interactant>
    <interactant intactId="EBI-7458">
        <id>Q03330</id>
        <label>GCN5</label>
    </interactant>
    <organismsDiffer>false</organismsDiffer>
    <experiments>2</experiments>
</comment>
<comment type="interaction">
    <interactant intactId="EBI-17372">
        <id>Q00772</id>
    </interactant>
    <interactant intactId="EBI-8659">
        <id>P02829</id>
        <label>HSP82</label>
    </interactant>
    <organismsDiffer>false</organismsDiffer>
    <experiments>5</experiments>
</comment>
<comment type="interaction">
    <interactant intactId="EBI-17372">
        <id>Q00772</id>
    </interactant>
    <interactant intactId="EBI-12253">
        <id>P38692</id>
        <label>KIC1</label>
    </interactant>
    <organismsDiffer>false</organismsDiffer>
    <experiments>3</experiments>
</comment>
<comment type="interaction">
    <interactant intactId="EBI-17372">
        <id>Q00772</id>
    </interactant>
    <interactant intactId="EBI-10108">
        <id>P38439</id>
        <label>LEO1</label>
    </interactant>
    <organismsDiffer>false</organismsDiffer>
    <experiments>2</experiments>
</comment>
<comment type="interaction">
    <interactant intactId="EBI-17372">
        <id>Q00772</id>
    </interactant>
    <interactant intactId="EBI-10968">
        <id>P32490</id>
        <label>MKK1</label>
    </interactant>
    <organismsDiffer>false</organismsDiffer>
    <experiments>4</experiments>
</comment>
<comment type="interaction">
    <interactant intactId="EBI-17372">
        <id>Q00772</id>
    </interactant>
    <interactant intactId="EBI-10973">
        <id>P32491</id>
        <label>MKK2</label>
    </interactant>
    <organismsDiffer>false</organismsDiffer>
    <experiments>5</experiments>
</comment>
<comment type="interaction">
    <interactant intactId="EBI-17372">
        <id>Q00772</id>
    </interactant>
    <interactant intactId="EBI-12855">
        <id>P38351</id>
        <label>PAF1</label>
    </interactant>
    <organismsDiffer>false</organismsDiffer>
    <experiments>2</experiments>
</comment>
<comment type="interaction">
    <interactant intactId="EBI-17372">
        <id>Q00772</id>
    </interactant>
    <interactant intactId="EBI-16303">
        <id>P53064</id>
        <label>RTF1</label>
    </interactant>
    <organismsDiffer>false</organismsDiffer>
    <experiments>2</experiments>
</comment>
<comment type="interaction">
    <interactant intactId="EBI-17372">
        <id>Q00772</id>
    </interactant>
    <interactant intactId="EBI-18191">
        <id>P53599</id>
        <label>SSK2</label>
    </interactant>
    <organismsDiffer>false</organismsDiffer>
    <experiments>2</experiments>
</comment>
<comment type="interaction">
    <interactant intactId="EBI-17372">
        <id>Q00772</id>
    </interactant>
    <interactant intactId="EBI-18264">
        <id>P13574</id>
        <label>STE12</label>
    </interactant>
    <organismsDiffer>false</organismsDiffer>
    <experiments>2</experiments>
</comment>
<comment type="domain">
    <text>The TXY motif contains the threonine and tyrosine residues whose phosphorylation activates the MAP kinases.</text>
</comment>
<comment type="PTM">
    <text>Dually phosphorylated on Thr-190 and Tyr-192, which activates the enzyme.</text>
</comment>
<comment type="miscellaneous">
    <text evidence="5">Present with 3230 molecules/cell in log phase SD medium.</text>
</comment>
<comment type="similarity">
    <text evidence="8">Belongs to the protein kinase superfamily. CMGC Ser/Thr protein kinase family. MAP kinase subfamily.</text>
</comment>
<reference key="1">
    <citation type="journal article" date="1991" name="Mol. Microbiol.">
        <title>A protein kinase gene complements the lytic phenotype of Saccharomyces cerevisiae lyt2 mutants.</title>
        <authorList>
            <person name="Torres L."/>
            <person name="Martin H."/>
            <person name="Garcia-Saez M.I."/>
            <person name="Arroyo J."/>
            <person name="Molina M."/>
            <person name="Sanchez M."/>
            <person name="Nombela C."/>
        </authorList>
    </citation>
    <scope>NUCLEOTIDE SEQUENCE [GENOMIC DNA]</scope>
    <source>
        <strain>ATCC 204510 / AB320</strain>
    </source>
</reference>
<reference key="2">
    <citation type="journal article" date="1994" name="Science">
        <title>Complete nucleotide sequence of Saccharomyces cerevisiae chromosome VIII.</title>
        <authorList>
            <person name="Johnston M."/>
            <person name="Andrews S."/>
            <person name="Brinkman R."/>
            <person name="Cooper J."/>
            <person name="Ding H."/>
            <person name="Dover J."/>
            <person name="Du Z."/>
            <person name="Favello A."/>
            <person name="Fulton L."/>
            <person name="Gattung S."/>
            <person name="Geisel C."/>
            <person name="Kirsten J."/>
            <person name="Kucaba T."/>
            <person name="Hillier L.W."/>
            <person name="Jier M."/>
            <person name="Johnston L."/>
            <person name="Langston Y."/>
            <person name="Latreille P."/>
            <person name="Louis E.J."/>
            <person name="Macri C."/>
            <person name="Mardis E."/>
            <person name="Menezes S."/>
            <person name="Mouser L."/>
            <person name="Nhan M."/>
            <person name="Rifkin L."/>
            <person name="Riles L."/>
            <person name="St Peter H."/>
            <person name="Trevaskis E."/>
            <person name="Vaughan K."/>
            <person name="Vignati D."/>
            <person name="Wilcox L."/>
            <person name="Wohldman P."/>
            <person name="Waterston R."/>
            <person name="Wilson R."/>
            <person name="Vaudin M."/>
        </authorList>
    </citation>
    <scope>NUCLEOTIDE SEQUENCE [LARGE SCALE GENOMIC DNA]</scope>
    <source>
        <strain>ATCC 204508 / S288c</strain>
    </source>
</reference>
<reference key="3">
    <citation type="journal article" date="2014" name="G3 (Bethesda)">
        <title>The reference genome sequence of Saccharomyces cerevisiae: Then and now.</title>
        <authorList>
            <person name="Engel S.R."/>
            <person name="Dietrich F.S."/>
            <person name="Fisk D.G."/>
            <person name="Binkley G."/>
            <person name="Balakrishnan R."/>
            <person name="Costanzo M.C."/>
            <person name="Dwight S.S."/>
            <person name="Hitz B.C."/>
            <person name="Karra K."/>
            <person name="Nash R.S."/>
            <person name="Weng S."/>
            <person name="Wong E.D."/>
            <person name="Lloyd P."/>
            <person name="Skrzypek M.S."/>
            <person name="Miyasato S.R."/>
            <person name="Simison M."/>
            <person name="Cherry J.M."/>
        </authorList>
    </citation>
    <scope>GENOME REANNOTATION</scope>
    <source>
        <strain>ATCC 204508 / S288c</strain>
    </source>
</reference>
<reference key="4">
    <citation type="journal article" date="1993" name="J. Cell Biol.">
        <title>The SLT2 (MPK1) MAP kinase homolog is involved in polarized cell growth in Saccharomyces cerevisiae.</title>
        <authorList>
            <person name="Mazzoni C."/>
            <person name="Zarzov P."/>
            <person name="Rambourg A."/>
            <person name="Mann C."/>
        </authorList>
    </citation>
    <scope>CHARACTERIZATION</scope>
</reference>
<reference key="5">
    <citation type="journal article" date="1997" name="Mol. Cell. Biol.">
        <title>Characterization of a serum response factor-like protein in Saccharomyces cerevisiae, Rlm1, which has transcriptional activity regulated by the Mpk1 (Slt2) mitogen-activated protein kinase pathway.</title>
        <authorList>
            <person name="Watanabe Y."/>
            <person name="Takaesu G."/>
            <person name="Hagiwara M."/>
            <person name="Irie K."/>
            <person name="Matsumoto K."/>
        </authorList>
    </citation>
    <scope>FUNCTION</scope>
    <scope>INTERACTION WITH RLM1</scope>
</reference>
<reference key="6">
    <citation type="journal article" date="2003" name="Nature">
        <title>Global analysis of protein expression in yeast.</title>
        <authorList>
            <person name="Ghaemmaghami S."/>
            <person name="Huh W.-K."/>
            <person name="Bower K."/>
            <person name="Howson R.W."/>
            <person name="Belle A."/>
            <person name="Dephoure N."/>
            <person name="O'Shea E.K."/>
            <person name="Weissman J.S."/>
        </authorList>
    </citation>
    <scope>LEVEL OF PROTEIN EXPRESSION [LARGE SCALE ANALYSIS]</scope>
</reference>
<reference key="7">
    <citation type="journal article" date="2007" name="J. Proteome Res.">
        <title>Large-scale phosphorylation analysis of alpha-factor-arrested Saccharomyces cerevisiae.</title>
        <authorList>
            <person name="Li X."/>
            <person name="Gerber S.A."/>
            <person name="Rudner A.D."/>
            <person name="Beausoleil S.A."/>
            <person name="Haas W."/>
            <person name="Villen J."/>
            <person name="Elias J.E."/>
            <person name="Gygi S.P."/>
        </authorList>
    </citation>
    <scope>PHOSPHORYLATION [LARGE SCALE ANALYSIS] AT TYR-192</scope>
    <scope>IDENTIFICATION BY MASS SPECTROMETRY [LARGE SCALE ANALYSIS]</scope>
    <source>
        <strain>ADR376</strain>
    </source>
</reference>
<reference key="8">
    <citation type="journal article" date="2009" name="Science">
        <title>Global analysis of Cdk1 substrate phosphorylation sites provides insights into evolution.</title>
        <authorList>
            <person name="Holt L.J."/>
            <person name="Tuch B.B."/>
            <person name="Villen J."/>
            <person name="Johnson A.D."/>
            <person name="Gygi S.P."/>
            <person name="Morgan D.O."/>
        </authorList>
    </citation>
    <scope>PHOSPHORYLATION [LARGE SCALE ANALYSIS] AT THR-190</scope>
    <scope>IDENTIFICATION BY MASS SPECTROMETRY [LARGE SCALE ANALYSIS]</scope>
</reference>
<reference key="9">
    <citation type="journal article" date="2010" name="Mol. Biol. Cell">
        <title>The rapamycin-sensitive phosphoproteome reveals that TOR controls protein kinase A toward some but not all substrates.</title>
        <authorList>
            <person name="Soulard A."/>
            <person name="Cremonesi A."/>
            <person name="Moes S."/>
            <person name="Schutz F."/>
            <person name="Jeno P."/>
            <person name="Hall M.N."/>
        </authorList>
    </citation>
    <scope>FUNCTION</scope>
</reference>
<organism>
    <name type="scientific">Saccharomyces cerevisiae (strain ATCC 204508 / S288c)</name>
    <name type="common">Baker's yeast</name>
    <dbReference type="NCBI Taxonomy" id="559292"/>
    <lineage>
        <taxon>Eukaryota</taxon>
        <taxon>Fungi</taxon>
        <taxon>Dikarya</taxon>
        <taxon>Ascomycota</taxon>
        <taxon>Saccharomycotina</taxon>
        <taxon>Saccharomycetes</taxon>
        <taxon>Saccharomycetales</taxon>
        <taxon>Saccharomycetaceae</taxon>
        <taxon>Saccharomyces</taxon>
    </lineage>
</organism>
<evidence type="ECO:0000250" key="1"/>
<evidence type="ECO:0000255" key="2">
    <source>
        <dbReference type="PROSITE-ProRule" id="PRU00159"/>
    </source>
</evidence>
<evidence type="ECO:0000255" key="3">
    <source>
        <dbReference type="PROSITE-ProRule" id="PRU10027"/>
    </source>
</evidence>
<evidence type="ECO:0000256" key="4">
    <source>
        <dbReference type="SAM" id="MobiDB-lite"/>
    </source>
</evidence>
<evidence type="ECO:0000269" key="5">
    <source>
    </source>
</evidence>
<evidence type="ECO:0000269" key="6">
    <source>
    </source>
</evidence>
<evidence type="ECO:0000269" key="7">
    <source>
    </source>
</evidence>
<evidence type="ECO:0000305" key="8"/>
<evidence type="ECO:0007744" key="9">
    <source>
    </source>
</evidence>
<evidence type="ECO:0007744" key="10">
    <source>
    </source>
</evidence>